<comment type="function">
    <text evidence="1">Catalyzes the complicated ring closure reaction between the two acyclic compounds 1-deoxy-D-xylulose-5-phosphate (DXP) and 3-amino-2-oxopropyl phosphate (1-amino-acetone-3-phosphate or AAP) to form pyridoxine 5'-phosphate (PNP) and inorganic phosphate.</text>
</comment>
<comment type="catalytic activity">
    <reaction evidence="1">
        <text>3-amino-2-oxopropyl phosphate + 1-deoxy-D-xylulose 5-phosphate = pyridoxine 5'-phosphate + phosphate + 2 H2O + H(+)</text>
        <dbReference type="Rhea" id="RHEA:15265"/>
        <dbReference type="ChEBI" id="CHEBI:15377"/>
        <dbReference type="ChEBI" id="CHEBI:15378"/>
        <dbReference type="ChEBI" id="CHEBI:43474"/>
        <dbReference type="ChEBI" id="CHEBI:57279"/>
        <dbReference type="ChEBI" id="CHEBI:57792"/>
        <dbReference type="ChEBI" id="CHEBI:58589"/>
        <dbReference type="EC" id="2.6.99.2"/>
    </reaction>
</comment>
<comment type="pathway">
    <text evidence="1">Cofactor biosynthesis; pyridoxine 5'-phosphate biosynthesis; pyridoxine 5'-phosphate from D-erythrose 4-phosphate: step 5/5.</text>
</comment>
<comment type="subunit">
    <text evidence="1">Homooctamer; tetramer of dimers.</text>
</comment>
<comment type="subcellular location">
    <subcellularLocation>
        <location evidence="1">Cytoplasm</location>
    </subcellularLocation>
</comment>
<comment type="similarity">
    <text evidence="1">Belongs to the PNP synthase family.</text>
</comment>
<comment type="sequence caution" evidence="2">
    <conflict type="erroneous initiation">
        <sequence resource="EMBL-CDS" id="ABB50177"/>
    </conflict>
</comment>
<dbReference type="EC" id="2.6.99.2" evidence="1"/>
<dbReference type="EMBL" id="CP000111">
    <property type="protein sequence ID" value="ABB50177.1"/>
    <property type="status" value="ALT_INIT"/>
    <property type="molecule type" value="Genomic_DNA"/>
</dbReference>
<dbReference type="RefSeq" id="WP_011376668.1">
    <property type="nucleotide sequence ID" value="NC_007577.1"/>
</dbReference>
<dbReference type="SMR" id="Q31AB8"/>
<dbReference type="STRING" id="74546.PMT9312_1118"/>
<dbReference type="KEGG" id="pmi:PMT9312_1118"/>
<dbReference type="eggNOG" id="COG0854">
    <property type="taxonomic scope" value="Bacteria"/>
</dbReference>
<dbReference type="HOGENOM" id="CLU_074563_0_0_3"/>
<dbReference type="OrthoDB" id="9806590at2"/>
<dbReference type="UniPathway" id="UPA00244">
    <property type="reaction ID" value="UER00313"/>
</dbReference>
<dbReference type="Proteomes" id="UP000002715">
    <property type="component" value="Chromosome"/>
</dbReference>
<dbReference type="GO" id="GO:0005829">
    <property type="term" value="C:cytosol"/>
    <property type="evidence" value="ECO:0007669"/>
    <property type="project" value="TreeGrafter"/>
</dbReference>
<dbReference type="GO" id="GO:0033856">
    <property type="term" value="F:pyridoxine 5'-phosphate synthase activity"/>
    <property type="evidence" value="ECO:0007669"/>
    <property type="project" value="UniProtKB-EC"/>
</dbReference>
<dbReference type="GO" id="GO:0008615">
    <property type="term" value="P:pyridoxine biosynthetic process"/>
    <property type="evidence" value="ECO:0007669"/>
    <property type="project" value="UniProtKB-UniRule"/>
</dbReference>
<dbReference type="CDD" id="cd00003">
    <property type="entry name" value="PNPsynthase"/>
    <property type="match status" value="1"/>
</dbReference>
<dbReference type="Gene3D" id="3.20.20.70">
    <property type="entry name" value="Aldolase class I"/>
    <property type="match status" value="1"/>
</dbReference>
<dbReference type="HAMAP" id="MF_00279">
    <property type="entry name" value="PdxJ"/>
    <property type="match status" value="1"/>
</dbReference>
<dbReference type="InterPro" id="IPR013785">
    <property type="entry name" value="Aldolase_TIM"/>
</dbReference>
<dbReference type="InterPro" id="IPR004569">
    <property type="entry name" value="PyrdxlP_synth_PdxJ"/>
</dbReference>
<dbReference type="InterPro" id="IPR036130">
    <property type="entry name" value="Pyridoxine-5'_phos_synth"/>
</dbReference>
<dbReference type="NCBIfam" id="TIGR00559">
    <property type="entry name" value="pdxJ"/>
    <property type="match status" value="1"/>
</dbReference>
<dbReference type="NCBIfam" id="NF003625">
    <property type="entry name" value="PRK05265.1-3"/>
    <property type="match status" value="1"/>
</dbReference>
<dbReference type="NCBIfam" id="NF003627">
    <property type="entry name" value="PRK05265.1-5"/>
    <property type="match status" value="1"/>
</dbReference>
<dbReference type="PANTHER" id="PTHR30456">
    <property type="entry name" value="PYRIDOXINE 5'-PHOSPHATE SYNTHASE"/>
    <property type="match status" value="1"/>
</dbReference>
<dbReference type="PANTHER" id="PTHR30456:SF0">
    <property type="entry name" value="PYRIDOXINE 5'-PHOSPHATE SYNTHASE"/>
    <property type="match status" value="1"/>
</dbReference>
<dbReference type="Pfam" id="PF03740">
    <property type="entry name" value="PdxJ"/>
    <property type="match status" value="1"/>
</dbReference>
<dbReference type="SUPFAM" id="SSF63892">
    <property type="entry name" value="Pyridoxine 5'-phosphate synthase"/>
    <property type="match status" value="1"/>
</dbReference>
<sequence length="238" mass="26638">MATLGVNIDHIANVRQARKTVEPDPVQFAFLAELGGADSITVHLREDRRHIQDRDVFLLKETIKTKLNLEMAATEEMLEIAKKTLPDYVTLVPEKREEVTTEGGLDLKSNAQYLKNFVENLKHSNIEVSAFIDPLGEQINYSKEIGFDFIELHTGKYAELSGSEQYKELQRIIESTHLANDLGLVVNAGHGLNYNNVKKIASINNMNELNIGHSIVARALAIGLEKSVREMKSLITSN</sequence>
<name>PDXJ_PROM9</name>
<accession>Q31AB8</accession>
<proteinExistence type="inferred from homology"/>
<keyword id="KW-0963">Cytoplasm</keyword>
<keyword id="KW-0664">Pyridoxine biosynthesis</keyword>
<keyword id="KW-0808">Transferase</keyword>
<organism>
    <name type="scientific">Prochlorococcus marinus (strain MIT 9312)</name>
    <dbReference type="NCBI Taxonomy" id="74546"/>
    <lineage>
        <taxon>Bacteria</taxon>
        <taxon>Bacillati</taxon>
        <taxon>Cyanobacteriota</taxon>
        <taxon>Cyanophyceae</taxon>
        <taxon>Synechococcales</taxon>
        <taxon>Prochlorococcaceae</taxon>
        <taxon>Prochlorococcus</taxon>
    </lineage>
</organism>
<reference key="1">
    <citation type="journal article" date="2006" name="Science">
        <title>Genomic islands and the ecology and evolution of Prochlorococcus.</title>
        <authorList>
            <person name="Coleman M.L."/>
            <person name="Sullivan M.B."/>
            <person name="Martiny A.C."/>
            <person name="Steglich C."/>
            <person name="Barry K."/>
            <person name="Delong E.F."/>
            <person name="Chisholm S.W."/>
        </authorList>
    </citation>
    <scope>NUCLEOTIDE SEQUENCE [LARGE SCALE GENOMIC DNA]</scope>
    <source>
        <strain>MIT 9312</strain>
    </source>
</reference>
<feature type="chain" id="PRO_0000231829" description="Pyridoxine 5'-phosphate synthase">
    <location>
        <begin position="1"/>
        <end position="238"/>
    </location>
</feature>
<feature type="active site" description="Proton acceptor" evidence="1">
    <location>
        <position position="43"/>
    </location>
</feature>
<feature type="active site" description="Proton acceptor" evidence="1">
    <location>
        <position position="70"/>
    </location>
</feature>
<feature type="active site" description="Proton donor" evidence="1">
    <location>
        <position position="190"/>
    </location>
</feature>
<feature type="binding site" evidence="1">
    <location>
        <position position="7"/>
    </location>
    <ligand>
        <name>3-amino-2-oxopropyl phosphate</name>
        <dbReference type="ChEBI" id="CHEBI:57279"/>
    </ligand>
</feature>
<feature type="binding site" evidence="1">
    <location>
        <begin position="9"/>
        <end position="10"/>
    </location>
    <ligand>
        <name>1-deoxy-D-xylulose 5-phosphate</name>
        <dbReference type="ChEBI" id="CHEBI:57792"/>
    </ligand>
</feature>
<feature type="binding site" evidence="1">
    <location>
        <position position="18"/>
    </location>
    <ligand>
        <name>3-amino-2-oxopropyl phosphate</name>
        <dbReference type="ChEBI" id="CHEBI:57279"/>
    </ligand>
</feature>
<feature type="binding site" evidence="1">
    <location>
        <position position="45"/>
    </location>
    <ligand>
        <name>1-deoxy-D-xylulose 5-phosphate</name>
        <dbReference type="ChEBI" id="CHEBI:57792"/>
    </ligand>
</feature>
<feature type="binding site" evidence="1">
    <location>
        <position position="50"/>
    </location>
    <ligand>
        <name>1-deoxy-D-xylulose 5-phosphate</name>
        <dbReference type="ChEBI" id="CHEBI:57792"/>
    </ligand>
</feature>
<feature type="binding site" evidence="1">
    <location>
        <position position="100"/>
    </location>
    <ligand>
        <name>1-deoxy-D-xylulose 5-phosphate</name>
        <dbReference type="ChEBI" id="CHEBI:57792"/>
    </ligand>
</feature>
<feature type="binding site" evidence="1">
    <location>
        <position position="191"/>
    </location>
    <ligand>
        <name>3-amino-2-oxopropyl phosphate</name>
        <dbReference type="ChEBI" id="CHEBI:57279"/>
    </ligand>
</feature>
<feature type="binding site" evidence="1">
    <location>
        <begin position="212"/>
        <end position="213"/>
    </location>
    <ligand>
        <name>3-amino-2-oxopropyl phosphate</name>
        <dbReference type="ChEBI" id="CHEBI:57279"/>
    </ligand>
</feature>
<feature type="site" description="Transition state stabilizer" evidence="1">
    <location>
        <position position="151"/>
    </location>
</feature>
<gene>
    <name evidence="1" type="primary">pdxJ</name>
    <name type="ordered locus">PMT9312_1118</name>
</gene>
<protein>
    <recommendedName>
        <fullName evidence="1">Pyridoxine 5'-phosphate synthase</fullName>
        <shortName evidence="1">PNP synthase</shortName>
        <ecNumber evidence="1">2.6.99.2</ecNumber>
    </recommendedName>
</protein>
<evidence type="ECO:0000255" key="1">
    <source>
        <dbReference type="HAMAP-Rule" id="MF_00279"/>
    </source>
</evidence>
<evidence type="ECO:0000305" key="2"/>